<dbReference type="EC" id="4.3.2.1" evidence="1"/>
<dbReference type="EMBL" id="CP000034">
    <property type="protein sequence ID" value="ABB63740.1"/>
    <property type="molecule type" value="Genomic_DNA"/>
</dbReference>
<dbReference type="RefSeq" id="WP_001230102.1">
    <property type="nucleotide sequence ID" value="NC_007606.1"/>
</dbReference>
<dbReference type="RefSeq" id="YP_405231.1">
    <property type="nucleotide sequence ID" value="NC_007606.1"/>
</dbReference>
<dbReference type="SMR" id="Q32AB5"/>
<dbReference type="STRING" id="300267.SDY_3795"/>
<dbReference type="EnsemblBacteria" id="ABB63740">
    <property type="protein sequence ID" value="ABB63740"/>
    <property type="gene ID" value="SDY_3795"/>
</dbReference>
<dbReference type="KEGG" id="sdy:SDY_3795"/>
<dbReference type="PATRIC" id="fig|300267.13.peg.4484"/>
<dbReference type="HOGENOM" id="CLU_027272_2_3_6"/>
<dbReference type="UniPathway" id="UPA00068">
    <property type="reaction ID" value="UER00114"/>
</dbReference>
<dbReference type="Proteomes" id="UP000002716">
    <property type="component" value="Chromosome"/>
</dbReference>
<dbReference type="GO" id="GO:0005829">
    <property type="term" value="C:cytosol"/>
    <property type="evidence" value="ECO:0007669"/>
    <property type="project" value="TreeGrafter"/>
</dbReference>
<dbReference type="GO" id="GO:0004056">
    <property type="term" value="F:argininosuccinate lyase activity"/>
    <property type="evidence" value="ECO:0007669"/>
    <property type="project" value="UniProtKB-UniRule"/>
</dbReference>
<dbReference type="GO" id="GO:0042450">
    <property type="term" value="P:arginine biosynthetic process via ornithine"/>
    <property type="evidence" value="ECO:0007669"/>
    <property type="project" value="InterPro"/>
</dbReference>
<dbReference type="GO" id="GO:0006526">
    <property type="term" value="P:L-arginine biosynthetic process"/>
    <property type="evidence" value="ECO:0007669"/>
    <property type="project" value="UniProtKB-UniRule"/>
</dbReference>
<dbReference type="CDD" id="cd01359">
    <property type="entry name" value="Argininosuccinate_lyase"/>
    <property type="match status" value="1"/>
</dbReference>
<dbReference type="FunFam" id="1.10.275.10:FF:000004">
    <property type="entry name" value="Argininosuccinate lyase"/>
    <property type="match status" value="1"/>
</dbReference>
<dbReference type="FunFam" id="1.10.40.30:FF:000001">
    <property type="entry name" value="Argininosuccinate lyase"/>
    <property type="match status" value="1"/>
</dbReference>
<dbReference type="FunFam" id="1.20.200.10:FF:000006">
    <property type="entry name" value="Argininosuccinate lyase"/>
    <property type="match status" value="1"/>
</dbReference>
<dbReference type="Gene3D" id="1.10.40.30">
    <property type="entry name" value="Fumarase/aspartase (C-terminal domain)"/>
    <property type="match status" value="1"/>
</dbReference>
<dbReference type="Gene3D" id="1.20.200.10">
    <property type="entry name" value="Fumarase/aspartase (Central domain)"/>
    <property type="match status" value="1"/>
</dbReference>
<dbReference type="Gene3D" id="1.10.275.10">
    <property type="entry name" value="Fumarase/aspartase (N-terminal domain)"/>
    <property type="match status" value="1"/>
</dbReference>
<dbReference type="HAMAP" id="MF_00006">
    <property type="entry name" value="Arg_succ_lyase"/>
    <property type="match status" value="1"/>
</dbReference>
<dbReference type="InterPro" id="IPR029419">
    <property type="entry name" value="Arg_succ_lyase_C"/>
</dbReference>
<dbReference type="InterPro" id="IPR009049">
    <property type="entry name" value="Argininosuccinate_lyase"/>
</dbReference>
<dbReference type="InterPro" id="IPR024083">
    <property type="entry name" value="Fumarase/histidase_N"/>
</dbReference>
<dbReference type="InterPro" id="IPR020557">
    <property type="entry name" value="Fumarate_lyase_CS"/>
</dbReference>
<dbReference type="InterPro" id="IPR000362">
    <property type="entry name" value="Fumarate_lyase_fam"/>
</dbReference>
<dbReference type="InterPro" id="IPR022761">
    <property type="entry name" value="Fumarate_lyase_N"/>
</dbReference>
<dbReference type="InterPro" id="IPR008948">
    <property type="entry name" value="L-Aspartase-like"/>
</dbReference>
<dbReference type="NCBIfam" id="TIGR00838">
    <property type="entry name" value="argH"/>
    <property type="match status" value="1"/>
</dbReference>
<dbReference type="NCBIfam" id="NF008964">
    <property type="entry name" value="PRK12308.1"/>
    <property type="match status" value="1"/>
</dbReference>
<dbReference type="PANTHER" id="PTHR43814">
    <property type="entry name" value="ARGININOSUCCINATE LYASE"/>
    <property type="match status" value="1"/>
</dbReference>
<dbReference type="PANTHER" id="PTHR43814:SF1">
    <property type="entry name" value="ARGININOSUCCINATE LYASE"/>
    <property type="match status" value="1"/>
</dbReference>
<dbReference type="Pfam" id="PF14698">
    <property type="entry name" value="ASL_C2"/>
    <property type="match status" value="1"/>
</dbReference>
<dbReference type="Pfam" id="PF00206">
    <property type="entry name" value="Lyase_1"/>
    <property type="match status" value="1"/>
</dbReference>
<dbReference type="PRINTS" id="PR00145">
    <property type="entry name" value="ARGSUCLYASE"/>
</dbReference>
<dbReference type="PRINTS" id="PR00149">
    <property type="entry name" value="FUMRATELYASE"/>
</dbReference>
<dbReference type="SUPFAM" id="SSF48557">
    <property type="entry name" value="L-aspartase-like"/>
    <property type="match status" value="1"/>
</dbReference>
<dbReference type="PROSITE" id="PS00163">
    <property type="entry name" value="FUMARATE_LYASES"/>
    <property type="match status" value="1"/>
</dbReference>
<reference key="1">
    <citation type="journal article" date="2005" name="Nucleic Acids Res.">
        <title>Genome dynamics and diversity of Shigella species, the etiologic agents of bacillary dysentery.</title>
        <authorList>
            <person name="Yang F."/>
            <person name="Yang J."/>
            <person name="Zhang X."/>
            <person name="Chen L."/>
            <person name="Jiang Y."/>
            <person name="Yan Y."/>
            <person name="Tang X."/>
            <person name="Wang J."/>
            <person name="Xiong Z."/>
            <person name="Dong J."/>
            <person name="Xue Y."/>
            <person name="Zhu Y."/>
            <person name="Xu X."/>
            <person name="Sun L."/>
            <person name="Chen S."/>
            <person name="Nie H."/>
            <person name="Peng J."/>
            <person name="Xu J."/>
            <person name="Wang Y."/>
            <person name="Yuan Z."/>
            <person name="Wen Y."/>
            <person name="Yao Z."/>
            <person name="Shen Y."/>
            <person name="Qiang B."/>
            <person name="Hou Y."/>
            <person name="Yu J."/>
            <person name="Jin Q."/>
        </authorList>
    </citation>
    <scope>NUCLEOTIDE SEQUENCE [LARGE SCALE GENOMIC DNA]</scope>
    <source>
        <strain>Sd197</strain>
    </source>
</reference>
<evidence type="ECO:0000255" key="1">
    <source>
        <dbReference type="HAMAP-Rule" id="MF_00006"/>
    </source>
</evidence>
<protein>
    <recommendedName>
        <fullName evidence="1">Argininosuccinate lyase</fullName>
        <shortName evidence="1">ASAL</shortName>
        <ecNumber evidence="1">4.3.2.1</ecNumber>
    </recommendedName>
    <alternativeName>
        <fullName evidence="1">Arginosuccinase</fullName>
    </alternativeName>
</protein>
<gene>
    <name evidence="1" type="primary">argH</name>
    <name type="ordered locus">SDY_3795</name>
</gene>
<name>ARLY_SHIDS</name>
<comment type="catalytic activity">
    <reaction evidence="1">
        <text>2-(N(omega)-L-arginino)succinate = fumarate + L-arginine</text>
        <dbReference type="Rhea" id="RHEA:24020"/>
        <dbReference type="ChEBI" id="CHEBI:29806"/>
        <dbReference type="ChEBI" id="CHEBI:32682"/>
        <dbReference type="ChEBI" id="CHEBI:57472"/>
        <dbReference type="EC" id="4.3.2.1"/>
    </reaction>
</comment>
<comment type="pathway">
    <text evidence="1">Amino-acid biosynthesis; L-arginine biosynthesis; L-arginine from L-ornithine and carbamoyl phosphate: step 3/3.</text>
</comment>
<comment type="subcellular location">
    <subcellularLocation>
        <location evidence="1">Cytoplasm</location>
    </subcellularLocation>
</comment>
<comment type="similarity">
    <text evidence="1">Belongs to the lyase 1 family. Argininosuccinate lyase subfamily.</text>
</comment>
<proteinExistence type="inferred from homology"/>
<feature type="chain" id="PRO_0000240769" description="Argininosuccinate lyase">
    <location>
        <begin position="1"/>
        <end position="457"/>
    </location>
</feature>
<accession>Q32AB5</accession>
<organism>
    <name type="scientific">Shigella dysenteriae serotype 1 (strain Sd197)</name>
    <dbReference type="NCBI Taxonomy" id="300267"/>
    <lineage>
        <taxon>Bacteria</taxon>
        <taxon>Pseudomonadati</taxon>
        <taxon>Pseudomonadota</taxon>
        <taxon>Gammaproteobacteria</taxon>
        <taxon>Enterobacterales</taxon>
        <taxon>Enterobacteriaceae</taxon>
        <taxon>Shigella</taxon>
    </lineage>
</organism>
<keyword id="KW-0028">Amino-acid biosynthesis</keyword>
<keyword id="KW-0055">Arginine biosynthesis</keyword>
<keyword id="KW-0963">Cytoplasm</keyword>
<keyword id="KW-0456">Lyase</keyword>
<keyword id="KW-1185">Reference proteome</keyword>
<sequence length="457" mass="50285">MALWGGRFTQAADQRFKQFNDSLRFDYRLAEQDIVGSVAWSKALVTVGVLTAEEQAQLEEALNVLLEDVRARPQQILESDAEDIHSWVEGKLIDKVGQLGKKLHTGRSRNDQVATDLKLWCKDTVSELLTANRQLQSVLVETAQNNQDAVMPGYTHLQRAQPVTFAHWCLAYVEMLARDESRLQDALKRLDVSPLGCGALAGTAYEIDREQLAGWLGFASATRNSLDSVSDRDHVLELLSAAAIGMVHLSRFAEDLIFFNTGEAGFVELSDRVTSGSSLMPQKKNPDALELIRGKCGRVQGALTGMMMTLKGLPLAYNKDMQEDKEGLFDALDTWLDCLHMAALVLDGIQVKRPRCQEAAQQGYANATELADYLVAKGVPFREAHHIVGEAVVEAIRQGKPLEDLPLDELQKFSPVIGEDVYPILSLQSCLDKRAAKGGVSPQQVAQAIAFAQARLG</sequence>